<evidence type="ECO:0000255" key="1"/>
<evidence type="ECO:0000255" key="2">
    <source>
        <dbReference type="PROSITE-ProRule" id="PRU01098"/>
    </source>
</evidence>
<evidence type="ECO:0000269" key="3">
    <source>
    </source>
</evidence>
<evidence type="ECO:0000303" key="4">
    <source>
    </source>
</evidence>
<evidence type="ECO:0000305" key="5"/>
<evidence type="ECO:0000312" key="6">
    <source>
        <dbReference type="EMBL" id="AAM21213.1"/>
    </source>
</evidence>
<keyword id="KW-0325">Glycoprotein</keyword>
<keyword id="KW-0391">Immunity</keyword>
<keyword id="KW-0399">Innate immunity</keyword>
<keyword id="KW-0964">Secreted</keyword>
<keyword id="KW-0732">Signal</keyword>
<protein>
    <recommendedName>
        <fullName evidence="6">Beta-1,3-glucan-binding protein</fullName>
        <shortName evidence="4">GBP</shortName>
    </recommendedName>
</protein>
<feature type="signal peptide" evidence="1">
    <location>
        <begin position="1"/>
        <end position="17"/>
    </location>
</feature>
<feature type="chain" id="PRO_0000407278" description="Beta-1,3-glucan-binding protein" evidence="1">
    <location>
        <begin position="18"/>
        <end position="366"/>
    </location>
</feature>
<feature type="domain" description="GH16" evidence="2">
    <location>
        <begin position="18"/>
        <end position="364"/>
    </location>
</feature>
<feature type="glycosylation site" description="N-linked (GlcNAc...) asparagine" evidence="1">
    <location>
        <position position="66"/>
    </location>
</feature>
<reference evidence="5 6" key="1">
    <citation type="journal article" date="2002" name="Dev. Comp. Immunol.">
        <title>A beta-1,3-glucan binding protein from the black tiger shrimp, Penaeus monodon.</title>
        <authorList>
            <person name="Sritunyalucksana K."/>
            <person name="Lee S.Y."/>
            <person name="Soderhall K."/>
        </authorList>
    </citation>
    <scope>NUCLEOTIDE SEQUENCE [MRNA]</scope>
    <scope>FUNCTION</scope>
    <scope>TISSUE SPECIFICITY</scope>
    <scope>INDUCTION</scope>
    <source>
        <tissue evidence="3">Hemocyte</tissue>
    </source>
</reference>
<accession>Q8N0N3</accession>
<dbReference type="EMBL" id="AF368168">
    <property type="protein sequence ID" value="AAM21213.1"/>
    <property type="molecule type" value="mRNA"/>
</dbReference>
<dbReference type="SMR" id="Q8N0N3"/>
<dbReference type="CAZy" id="GH16">
    <property type="family name" value="Glycoside Hydrolase Family 16"/>
</dbReference>
<dbReference type="OrthoDB" id="4781at2759"/>
<dbReference type="GO" id="GO:0005576">
    <property type="term" value="C:extracellular region"/>
    <property type="evidence" value="ECO:0007669"/>
    <property type="project" value="UniProtKB-SubCell"/>
</dbReference>
<dbReference type="GO" id="GO:0001872">
    <property type="term" value="F:(1-&gt;3)-beta-D-glucan binding"/>
    <property type="evidence" value="ECO:0000314"/>
    <property type="project" value="UniProtKB"/>
</dbReference>
<dbReference type="GO" id="GO:0004553">
    <property type="term" value="F:hydrolase activity, hydrolyzing O-glycosyl compounds"/>
    <property type="evidence" value="ECO:0007669"/>
    <property type="project" value="InterPro"/>
</dbReference>
<dbReference type="GO" id="GO:0005975">
    <property type="term" value="P:carbohydrate metabolic process"/>
    <property type="evidence" value="ECO:0007669"/>
    <property type="project" value="InterPro"/>
</dbReference>
<dbReference type="GO" id="GO:0045087">
    <property type="term" value="P:innate immune response"/>
    <property type="evidence" value="ECO:0000303"/>
    <property type="project" value="UniProtKB"/>
</dbReference>
<dbReference type="CDD" id="cd08024">
    <property type="entry name" value="GH16_CCF"/>
    <property type="match status" value="1"/>
</dbReference>
<dbReference type="Gene3D" id="2.60.120.200">
    <property type="match status" value="1"/>
</dbReference>
<dbReference type="InterPro" id="IPR013320">
    <property type="entry name" value="ConA-like_dom_sf"/>
</dbReference>
<dbReference type="InterPro" id="IPR000757">
    <property type="entry name" value="GH16"/>
</dbReference>
<dbReference type="InterPro" id="IPR050546">
    <property type="entry name" value="Glycosyl_Hydrlase_16"/>
</dbReference>
<dbReference type="PANTHER" id="PTHR10963:SF55">
    <property type="entry name" value="GLYCOSIDE HYDROLASE FAMILY 16 PROTEIN"/>
    <property type="match status" value="1"/>
</dbReference>
<dbReference type="PANTHER" id="PTHR10963">
    <property type="entry name" value="GLYCOSYL HYDROLASE-RELATED"/>
    <property type="match status" value="1"/>
</dbReference>
<dbReference type="Pfam" id="PF00722">
    <property type="entry name" value="Glyco_hydro_16"/>
    <property type="match status" value="1"/>
</dbReference>
<dbReference type="SUPFAM" id="SSF49899">
    <property type="entry name" value="Concanavalin A-like lectins/glucanases"/>
    <property type="match status" value="1"/>
</dbReference>
<dbReference type="PROSITE" id="PS51762">
    <property type="entry name" value="GH16_2"/>
    <property type="match status" value="1"/>
</dbReference>
<organism>
    <name type="scientific">Penaeus monodon</name>
    <name type="common">Giant tiger prawn</name>
    <dbReference type="NCBI Taxonomy" id="6687"/>
    <lineage>
        <taxon>Eukaryota</taxon>
        <taxon>Metazoa</taxon>
        <taxon>Ecdysozoa</taxon>
        <taxon>Arthropoda</taxon>
        <taxon>Crustacea</taxon>
        <taxon>Multicrustacea</taxon>
        <taxon>Malacostraca</taxon>
        <taxon>Eumalacostraca</taxon>
        <taxon>Eucarida</taxon>
        <taxon>Decapoda</taxon>
        <taxon>Dendrobranchiata</taxon>
        <taxon>Penaeoidea</taxon>
        <taxon>Penaeidae</taxon>
        <taxon>Penaeus</taxon>
    </lineage>
</organism>
<proteinExistence type="evidence at transcript level"/>
<comment type="function">
    <text evidence="3">Binds to beta-1,3-glucan. May play a role in recognition of microorganisms and in activation of the prophenoloxidase cascade.</text>
</comment>
<comment type="subcellular location">
    <subcellularLocation>
        <location evidence="5">Secreted</location>
    </subcellularLocation>
</comment>
<comment type="tissue specificity">
    <text evidence="3">Constitutively expressed in hemocytes.</text>
</comment>
<comment type="induction">
    <text evidence="3">Not induced by injection with the beta-1,3-glucan curdlan or the shrimp pathogen V.harveyi.</text>
</comment>
<comment type="similarity">
    <text evidence="5">Belongs to the glycosyl hydrolase 16 family.</text>
</comment>
<sequence>MKGFVASVVLLACGALAADIVEPEDCTSFPCMIFEDNFDYLDNDIWEHEITMSGGGNWEFQAYVNNRSISYTRDSTLFIKPDLTSNWKGEDFLSSGTLDLWGMNGRGDVCTGNSYYGCSRVGSSSNIINPVTSARLRTMSNFAFRYGRLEVRAKMPRGDWLWPAIWMLPRNWPYGLWPASGEIDILESRGNDDFGTLGNQYGGTTLHWGPFWPYNFFEKTHAEYSANTGSFADDFHVWRLDWTKDNMEFYVDDVLQLTVDPGTSFWDFAGMGPFFDNPWAAGAKMAPFDQKFYLILNVAVGGTNGFFPDGIASKPWSNLSPTAFLDFWNARDEWLPSWKAGEDRISEGAAMQVDYVRVWKMESTEQ</sequence>
<name>BGBP_PENMO</name>